<name>RL6_HERA2</name>
<proteinExistence type="inferred from homology"/>
<protein>
    <recommendedName>
        <fullName evidence="1">Large ribosomal subunit protein uL6</fullName>
    </recommendedName>
    <alternativeName>
        <fullName evidence="2">50S ribosomal protein L6</fullName>
    </alternativeName>
</protein>
<sequence>MSRIGRKPIEVPAGVTVNVDSNNLVTVKGPKGTLSESIRPEVTVNINGATVEITRVNDSRQARAFHGLSRTLVANMVDGVTKGFEKTLEMNGTGYRATLDGKTLVLSLGFSHPVRVEPYEGNSFEVAERRVVIKGPNKQKVGDQAANIRKLRPPEPYLGKGIKYSDEVIRRKAGKAGKK</sequence>
<dbReference type="EMBL" id="CP000875">
    <property type="protein sequence ID" value="ABX07559.1"/>
    <property type="molecule type" value="Genomic_DNA"/>
</dbReference>
<dbReference type="SMR" id="A9B426"/>
<dbReference type="FunCoup" id="A9B426">
    <property type="interactions" value="507"/>
</dbReference>
<dbReference type="STRING" id="316274.Haur_4929"/>
<dbReference type="KEGG" id="hau:Haur_4929"/>
<dbReference type="eggNOG" id="COG0097">
    <property type="taxonomic scope" value="Bacteria"/>
</dbReference>
<dbReference type="HOGENOM" id="CLU_065464_1_2_0"/>
<dbReference type="InParanoid" id="A9B426"/>
<dbReference type="Proteomes" id="UP000000787">
    <property type="component" value="Chromosome"/>
</dbReference>
<dbReference type="GO" id="GO:0022625">
    <property type="term" value="C:cytosolic large ribosomal subunit"/>
    <property type="evidence" value="ECO:0007669"/>
    <property type="project" value="TreeGrafter"/>
</dbReference>
<dbReference type="GO" id="GO:0019843">
    <property type="term" value="F:rRNA binding"/>
    <property type="evidence" value="ECO:0007669"/>
    <property type="project" value="UniProtKB-UniRule"/>
</dbReference>
<dbReference type="GO" id="GO:0003735">
    <property type="term" value="F:structural constituent of ribosome"/>
    <property type="evidence" value="ECO:0007669"/>
    <property type="project" value="InterPro"/>
</dbReference>
<dbReference type="GO" id="GO:0002181">
    <property type="term" value="P:cytoplasmic translation"/>
    <property type="evidence" value="ECO:0007669"/>
    <property type="project" value="TreeGrafter"/>
</dbReference>
<dbReference type="FunFam" id="3.90.930.12:FF:000002">
    <property type="entry name" value="50S ribosomal protein L6"/>
    <property type="match status" value="1"/>
</dbReference>
<dbReference type="Gene3D" id="3.90.930.12">
    <property type="entry name" value="Ribosomal protein L6, alpha-beta domain"/>
    <property type="match status" value="2"/>
</dbReference>
<dbReference type="HAMAP" id="MF_01365_B">
    <property type="entry name" value="Ribosomal_uL6_B"/>
    <property type="match status" value="1"/>
</dbReference>
<dbReference type="InterPro" id="IPR000702">
    <property type="entry name" value="Ribosomal_uL6-like"/>
</dbReference>
<dbReference type="InterPro" id="IPR036789">
    <property type="entry name" value="Ribosomal_uL6-like_a/b-dom_sf"/>
</dbReference>
<dbReference type="InterPro" id="IPR020040">
    <property type="entry name" value="Ribosomal_uL6_a/b-dom"/>
</dbReference>
<dbReference type="InterPro" id="IPR019906">
    <property type="entry name" value="Ribosomal_uL6_bac-type"/>
</dbReference>
<dbReference type="NCBIfam" id="TIGR03654">
    <property type="entry name" value="L6_bact"/>
    <property type="match status" value="1"/>
</dbReference>
<dbReference type="PANTHER" id="PTHR11655">
    <property type="entry name" value="60S/50S RIBOSOMAL PROTEIN L6/L9"/>
    <property type="match status" value="1"/>
</dbReference>
<dbReference type="PANTHER" id="PTHR11655:SF14">
    <property type="entry name" value="LARGE RIBOSOMAL SUBUNIT PROTEIN UL6M"/>
    <property type="match status" value="1"/>
</dbReference>
<dbReference type="Pfam" id="PF00347">
    <property type="entry name" value="Ribosomal_L6"/>
    <property type="match status" value="2"/>
</dbReference>
<dbReference type="PIRSF" id="PIRSF002162">
    <property type="entry name" value="Ribosomal_L6"/>
    <property type="match status" value="1"/>
</dbReference>
<dbReference type="PRINTS" id="PR00059">
    <property type="entry name" value="RIBOSOMALL6"/>
</dbReference>
<dbReference type="SUPFAM" id="SSF56053">
    <property type="entry name" value="Ribosomal protein L6"/>
    <property type="match status" value="2"/>
</dbReference>
<keyword id="KW-0687">Ribonucleoprotein</keyword>
<keyword id="KW-0689">Ribosomal protein</keyword>
<keyword id="KW-0694">RNA-binding</keyword>
<keyword id="KW-0699">rRNA-binding</keyword>
<organism>
    <name type="scientific">Herpetosiphon aurantiacus (strain ATCC 23779 / DSM 785 / 114-95)</name>
    <dbReference type="NCBI Taxonomy" id="316274"/>
    <lineage>
        <taxon>Bacteria</taxon>
        <taxon>Bacillati</taxon>
        <taxon>Chloroflexota</taxon>
        <taxon>Chloroflexia</taxon>
        <taxon>Herpetosiphonales</taxon>
        <taxon>Herpetosiphonaceae</taxon>
        <taxon>Herpetosiphon</taxon>
    </lineage>
</organism>
<accession>A9B426</accession>
<reference key="1">
    <citation type="journal article" date="2011" name="Stand. Genomic Sci.">
        <title>Complete genome sequence of the filamentous gliding predatory bacterium Herpetosiphon aurantiacus type strain (114-95(T)).</title>
        <authorList>
            <person name="Kiss H."/>
            <person name="Nett M."/>
            <person name="Domin N."/>
            <person name="Martin K."/>
            <person name="Maresca J.A."/>
            <person name="Copeland A."/>
            <person name="Lapidus A."/>
            <person name="Lucas S."/>
            <person name="Berry K.W."/>
            <person name="Glavina Del Rio T."/>
            <person name="Dalin E."/>
            <person name="Tice H."/>
            <person name="Pitluck S."/>
            <person name="Richardson P."/>
            <person name="Bruce D."/>
            <person name="Goodwin L."/>
            <person name="Han C."/>
            <person name="Detter J.C."/>
            <person name="Schmutz J."/>
            <person name="Brettin T."/>
            <person name="Land M."/>
            <person name="Hauser L."/>
            <person name="Kyrpides N.C."/>
            <person name="Ivanova N."/>
            <person name="Goeker M."/>
            <person name="Woyke T."/>
            <person name="Klenk H.P."/>
            <person name="Bryant D.A."/>
        </authorList>
    </citation>
    <scope>NUCLEOTIDE SEQUENCE [LARGE SCALE GENOMIC DNA]</scope>
    <source>
        <strain>ATCC 23779 / DSM 785 / 114-95</strain>
    </source>
</reference>
<gene>
    <name evidence="1" type="primary">rplF</name>
    <name type="ordered locus">Haur_4929</name>
</gene>
<evidence type="ECO:0000255" key="1">
    <source>
        <dbReference type="HAMAP-Rule" id="MF_01365"/>
    </source>
</evidence>
<evidence type="ECO:0000305" key="2"/>
<comment type="function">
    <text evidence="1">This protein binds to the 23S rRNA, and is important in its secondary structure. It is located near the subunit interface in the base of the L7/L12 stalk, and near the tRNA binding site of the peptidyltransferase center.</text>
</comment>
<comment type="subunit">
    <text evidence="1">Part of the 50S ribosomal subunit.</text>
</comment>
<comment type="similarity">
    <text evidence="1">Belongs to the universal ribosomal protein uL6 family.</text>
</comment>
<feature type="chain" id="PRO_1000144001" description="Large ribosomal subunit protein uL6">
    <location>
        <begin position="1"/>
        <end position="179"/>
    </location>
</feature>